<proteinExistence type="inferred from homology"/>
<keyword id="KW-0150">Chloroplast</keyword>
<keyword id="KW-0240">DNA-directed RNA polymerase</keyword>
<keyword id="KW-0548">Nucleotidyltransferase</keyword>
<keyword id="KW-0934">Plastid</keyword>
<keyword id="KW-0804">Transcription</keyword>
<keyword id="KW-0808">Transferase</keyword>
<evidence type="ECO:0000255" key="1">
    <source>
        <dbReference type="HAMAP-Rule" id="MF_01321"/>
    </source>
</evidence>
<sequence length="1073" mass="121115">MLGDGKEGTSTIPGFNQIQFEGFYRFIDQGLIEEVSKFPKIEDIDQEIEFQLFVETYQLVEPLIKERDAVYESLTYSSELYVSAGLIWKTSRNMQEQRIFIGNIPLMNSLGTSIVNGIYRIVINQILQSPGIYYQSELDHNGISVYTGTIISDWGGRLELEIDKKARIWARVSRKQKISILVLSSAMGLNLREILENVCYPEIFLSFLTDKEKKQIGSKENAILEFYQQFSCVGGDPIFSESLCKELQKKFFHQRCELGRIGRRNINWRLNLTIPQNNIFLLPRDILAAADHLIGMKFGMGTLDDMNHLQNKRIRSVADLLQDQFGLALARLENVVKGTICGAIKHKLIPTPQNLVTATPLTTTYESFFGLHPLSQVLDRTNPLTQIVHGRKLSYLGPGGLTGRTANFRIRDIHPSHYGRICPIDTSEGINVGLIGSLAIHARIGDWGSLESPFYELFEKSKKARIRMLFLSPSQDEYYMIAAGNSLALNRGIQEEQAVPARYRQEFLTIAWEEVHLRSIFPFQYFSIGASLIPFIEHNDANRALMSSNMQRQAVPLSRSEKCIVGTGLERQVALDSGVPAIAEQEGKILYTDTKKIILSGYGDNTLGIPLIRYQRSNKNTCMHQKPQVRRGKCIKKGQILADGAATVGGELALGKNILVGYMPWEGYNFEDAVLISECLVYGNIYTSFHIRKYEIQTHVTTQGPERITKEIPHLEGRLLRNLDKNGIVMLGSWVETGDILVGKLTPQVAKESSYAPEDRLLRAILGIQVSTSKETCLKLPIGGRGRVIDVRWVQKKGGSSYNPEKIRVYISQKREIKVGDKVAGRHGNKGIISKILPRQDMPYLQDGRPVDMVFNPLGVPSRMNVGQIFECSLGLAGSLLDRHYRIAPFDERYEQEASRKLVFSELYEASKQTANPWVFEPEYPGKSRIFDGRTGDPFEQPVIIGKPYILKLIHQVDDKIHGRSSGHYALVTQQPLRGRSKQGGQRVGEMEVWALEGFGVAHILQEMLTYKSDHIRARQEVLGTTIIGGTIPKPEDAPESFRLLVRELRSLALDLNHFLVSEKNFQINRKEV</sequence>
<protein>
    <recommendedName>
        <fullName evidence="1">DNA-directed RNA polymerase subunit beta</fullName>
        <ecNumber evidence="1">2.7.7.6</ecNumber>
    </recommendedName>
    <alternativeName>
        <fullName evidence="1">PEP</fullName>
    </alternativeName>
    <alternativeName>
        <fullName evidence="1">Plastid-encoded RNA polymerase subunit beta</fullName>
        <shortName evidence="1">RNA polymerase subunit beta</shortName>
    </alternativeName>
</protein>
<geneLocation type="chloroplast"/>
<reference key="1">
    <citation type="submission" date="2007-03" db="EMBL/GenBank/DDBJ databases">
        <title>Sequencing analysis of Aethionema coridifolium chloroplast DNA.</title>
        <authorList>
            <person name="Hosouchi T."/>
            <person name="Tsuruoka H."/>
            <person name="Kotani H."/>
        </authorList>
    </citation>
    <scope>NUCLEOTIDE SEQUENCE [LARGE SCALE GENOMIC DNA]</scope>
</reference>
<name>RPOB_AETCO</name>
<accession>A4QJA7</accession>
<dbReference type="EC" id="2.7.7.6" evidence="1"/>
<dbReference type="EMBL" id="AP009366">
    <property type="protein sequence ID" value="BAF49762.1"/>
    <property type="molecule type" value="Genomic_DNA"/>
</dbReference>
<dbReference type="RefSeq" id="YP_001122938.1">
    <property type="nucleotide sequence ID" value="NC_009265.1"/>
</dbReference>
<dbReference type="SMR" id="A4QJA7"/>
<dbReference type="GeneID" id="4968618"/>
<dbReference type="GO" id="GO:0009507">
    <property type="term" value="C:chloroplast"/>
    <property type="evidence" value="ECO:0007669"/>
    <property type="project" value="UniProtKB-SubCell"/>
</dbReference>
<dbReference type="GO" id="GO:0000428">
    <property type="term" value="C:DNA-directed RNA polymerase complex"/>
    <property type="evidence" value="ECO:0007669"/>
    <property type="project" value="UniProtKB-KW"/>
</dbReference>
<dbReference type="GO" id="GO:0005739">
    <property type="term" value="C:mitochondrion"/>
    <property type="evidence" value="ECO:0007669"/>
    <property type="project" value="GOC"/>
</dbReference>
<dbReference type="GO" id="GO:0003677">
    <property type="term" value="F:DNA binding"/>
    <property type="evidence" value="ECO:0007669"/>
    <property type="project" value="UniProtKB-UniRule"/>
</dbReference>
<dbReference type="GO" id="GO:0003899">
    <property type="term" value="F:DNA-directed RNA polymerase activity"/>
    <property type="evidence" value="ECO:0007669"/>
    <property type="project" value="UniProtKB-UniRule"/>
</dbReference>
<dbReference type="GO" id="GO:0032549">
    <property type="term" value="F:ribonucleoside binding"/>
    <property type="evidence" value="ECO:0007669"/>
    <property type="project" value="InterPro"/>
</dbReference>
<dbReference type="GO" id="GO:0006351">
    <property type="term" value="P:DNA-templated transcription"/>
    <property type="evidence" value="ECO:0007669"/>
    <property type="project" value="UniProtKB-UniRule"/>
</dbReference>
<dbReference type="CDD" id="cd00653">
    <property type="entry name" value="RNA_pol_B_RPB2"/>
    <property type="match status" value="1"/>
</dbReference>
<dbReference type="FunFam" id="2.40.50.150:FF:000006">
    <property type="entry name" value="DNA-directed RNA polymerase subunit beta"/>
    <property type="match status" value="1"/>
</dbReference>
<dbReference type="FunFam" id="3.90.1110.10:FF:000009">
    <property type="entry name" value="DNA-directed RNA polymerase subunit beta"/>
    <property type="match status" value="1"/>
</dbReference>
<dbReference type="Gene3D" id="2.40.50.100">
    <property type="match status" value="1"/>
</dbReference>
<dbReference type="Gene3D" id="2.40.50.150">
    <property type="match status" value="1"/>
</dbReference>
<dbReference type="Gene3D" id="3.90.1100.10">
    <property type="match status" value="1"/>
</dbReference>
<dbReference type="Gene3D" id="2.30.150.10">
    <property type="entry name" value="DNA-directed RNA polymerase, beta subunit, external 1 domain"/>
    <property type="match status" value="1"/>
</dbReference>
<dbReference type="Gene3D" id="2.40.270.10">
    <property type="entry name" value="DNA-directed RNA polymerase, subunit 2, domain 6"/>
    <property type="match status" value="1"/>
</dbReference>
<dbReference type="Gene3D" id="3.90.1800.10">
    <property type="entry name" value="RNA polymerase alpha subunit dimerisation domain"/>
    <property type="match status" value="1"/>
</dbReference>
<dbReference type="Gene3D" id="3.90.1110.10">
    <property type="entry name" value="RNA polymerase Rpb2, domain 2"/>
    <property type="match status" value="1"/>
</dbReference>
<dbReference type="HAMAP" id="MF_01321">
    <property type="entry name" value="RNApol_bact_RpoB"/>
    <property type="match status" value="1"/>
</dbReference>
<dbReference type="InterPro" id="IPR042107">
    <property type="entry name" value="DNA-dir_RNA_pol_bsu_ext_1_sf"/>
</dbReference>
<dbReference type="InterPro" id="IPR015712">
    <property type="entry name" value="DNA-dir_RNA_pol_su2"/>
</dbReference>
<dbReference type="InterPro" id="IPR007120">
    <property type="entry name" value="DNA-dir_RNAP_su2_dom"/>
</dbReference>
<dbReference type="InterPro" id="IPR037033">
    <property type="entry name" value="DNA-dir_RNAP_su2_hyb_sf"/>
</dbReference>
<dbReference type="InterPro" id="IPR010243">
    <property type="entry name" value="RNA_pol_bsu_bac"/>
</dbReference>
<dbReference type="InterPro" id="IPR007121">
    <property type="entry name" value="RNA_pol_bsu_CS"/>
</dbReference>
<dbReference type="InterPro" id="IPR007642">
    <property type="entry name" value="RNA_pol_Rpb2_2"/>
</dbReference>
<dbReference type="InterPro" id="IPR037034">
    <property type="entry name" value="RNA_pol_Rpb2_2_sf"/>
</dbReference>
<dbReference type="InterPro" id="IPR007645">
    <property type="entry name" value="RNA_pol_Rpb2_3"/>
</dbReference>
<dbReference type="InterPro" id="IPR007641">
    <property type="entry name" value="RNA_pol_Rpb2_7"/>
</dbReference>
<dbReference type="InterPro" id="IPR014724">
    <property type="entry name" value="RNA_pol_RPB2_OB-fold"/>
</dbReference>
<dbReference type="NCBIfam" id="NF001616">
    <property type="entry name" value="PRK00405.1"/>
    <property type="match status" value="1"/>
</dbReference>
<dbReference type="PANTHER" id="PTHR20856">
    <property type="entry name" value="DNA-DIRECTED RNA POLYMERASE I SUBUNIT 2"/>
    <property type="match status" value="1"/>
</dbReference>
<dbReference type="Pfam" id="PF04561">
    <property type="entry name" value="RNA_pol_Rpb2_2"/>
    <property type="match status" value="1"/>
</dbReference>
<dbReference type="Pfam" id="PF04565">
    <property type="entry name" value="RNA_pol_Rpb2_3"/>
    <property type="match status" value="1"/>
</dbReference>
<dbReference type="Pfam" id="PF00562">
    <property type="entry name" value="RNA_pol_Rpb2_6"/>
    <property type="match status" value="1"/>
</dbReference>
<dbReference type="Pfam" id="PF04560">
    <property type="entry name" value="RNA_pol_Rpb2_7"/>
    <property type="match status" value="1"/>
</dbReference>
<dbReference type="SUPFAM" id="SSF64484">
    <property type="entry name" value="beta and beta-prime subunits of DNA dependent RNA-polymerase"/>
    <property type="match status" value="1"/>
</dbReference>
<dbReference type="PROSITE" id="PS01166">
    <property type="entry name" value="RNA_POL_BETA"/>
    <property type="match status" value="1"/>
</dbReference>
<gene>
    <name evidence="1" type="primary">rpoB</name>
</gene>
<feature type="chain" id="PRO_0000300429" description="DNA-directed RNA polymerase subunit beta">
    <location>
        <begin position="1"/>
        <end position="1073"/>
    </location>
</feature>
<organism>
    <name type="scientific">Aethionema cordifolium</name>
    <name type="common">Lebanon stonecress</name>
    <dbReference type="NCBI Taxonomy" id="434059"/>
    <lineage>
        <taxon>Eukaryota</taxon>
        <taxon>Viridiplantae</taxon>
        <taxon>Streptophyta</taxon>
        <taxon>Embryophyta</taxon>
        <taxon>Tracheophyta</taxon>
        <taxon>Spermatophyta</taxon>
        <taxon>Magnoliopsida</taxon>
        <taxon>eudicotyledons</taxon>
        <taxon>Gunneridae</taxon>
        <taxon>Pentapetalae</taxon>
        <taxon>rosids</taxon>
        <taxon>malvids</taxon>
        <taxon>Brassicales</taxon>
        <taxon>Brassicaceae</taxon>
        <taxon>Aethionemeae</taxon>
        <taxon>Aethionema</taxon>
    </lineage>
</organism>
<comment type="function">
    <text evidence="1">DNA-dependent RNA polymerase catalyzes the transcription of DNA into RNA using the four ribonucleoside triphosphates as substrates.</text>
</comment>
<comment type="catalytic activity">
    <reaction evidence="1">
        <text>RNA(n) + a ribonucleoside 5'-triphosphate = RNA(n+1) + diphosphate</text>
        <dbReference type="Rhea" id="RHEA:21248"/>
        <dbReference type="Rhea" id="RHEA-COMP:14527"/>
        <dbReference type="Rhea" id="RHEA-COMP:17342"/>
        <dbReference type="ChEBI" id="CHEBI:33019"/>
        <dbReference type="ChEBI" id="CHEBI:61557"/>
        <dbReference type="ChEBI" id="CHEBI:140395"/>
        <dbReference type="EC" id="2.7.7.6"/>
    </reaction>
</comment>
<comment type="subunit">
    <text evidence="1">In plastids the minimal PEP RNA polymerase catalytic core is composed of four subunits: alpha, beta, beta', and beta''. When a (nuclear-encoded) sigma factor is associated with the core the holoenzyme is formed, which can initiate transcription.</text>
</comment>
<comment type="subcellular location">
    <subcellularLocation>
        <location>Plastid</location>
        <location>Chloroplast</location>
    </subcellularLocation>
</comment>
<comment type="similarity">
    <text evidence="1">Belongs to the RNA polymerase beta chain family.</text>
</comment>